<organism>
    <name type="scientific">Halorhodospira halophila (strain DSM 244 / SL1)</name>
    <name type="common">Ectothiorhodospira halophila (strain DSM 244 / SL1)</name>
    <dbReference type="NCBI Taxonomy" id="349124"/>
    <lineage>
        <taxon>Bacteria</taxon>
        <taxon>Pseudomonadati</taxon>
        <taxon>Pseudomonadota</taxon>
        <taxon>Gammaproteobacteria</taxon>
        <taxon>Chromatiales</taxon>
        <taxon>Ectothiorhodospiraceae</taxon>
        <taxon>Halorhodospira</taxon>
    </lineage>
</organism>
<gene>
    <name evidence="1" type="primary">rppH</name>
    <name evidence="1" type="synonym">nudH</name>
    <name type="ordered locus">Hhal_0885</name>
</gene>
<feature type="chain" id="PRO_1000021953" description="RNA pyrophosphohydrolase">
    <location>
        <begin position="1"/>
        <end position="181"/>
    </location>
</feature>
<feature type="domain" description="Nudix hydrolase" evidence="1">
    <location>
        <begin position="6"/>
        <end position="148"/>
    </location>
</feature>
<feature type="short sequence motif" description="Nudix box">
    <location>
        <begin position="38"/>
        <end position="59"/>
    </location>
</feature>
<dbReference type="EC" id="3.6.1.-" evidence="1"/>
<dbReference type="EMBL" id="CP000544">
    <property type="protein sequence ID" value="ABM61661.1"/>
    <property type="molecule type" value="Genomic_DNA"/>
</dbReference>
<dbReference type="RefSeq" id="WP_011813684.1">
    <property type="nucleotide sequence ID" value="NC_008789.1"/>
</dbReference>
<dbReference type="SMR" id="A1WVE9"/>
<dbReference type="STRING" id="349124.Hhal_0885"/>
<dbReference type="KEGG" id="hha:Hhal_0885"/>
<dbReference type="eggNOG" id="COG0494">
    <property type="taxonomic scope" value="Bacteria"/>
</dbReference>
<dbReference type="HOGENOM" id="CLU_087195_3_1_6"/>
<dbReference type="OrthoDB" id="9816040at2"/>
<dbReference type="Proteomes" id="UP000000647">
    <property type="component" value="Chromosome"/>
</dbReference>
<dbReference type="GO" id="GO:0016462">
    <property type="term" value="F:pyrophosphatase activity"/>
    <property type="evidence" value="ECO:0007669"/>
    <property type="project" value="UniProtKB-ARBA"/>
</dbReference>
<dbReference type="CDD" id="cd03671">
    <property type="entry name" value="NUDIX_Ap4A_hydrolase_plant_like"/>
    <property type="match status" value="1"/>
</dbReference>
<dbReference type="FunFam" id="3.90.79.10:FF:000001">
    <property type="entry name" value="RNA pyrophosphohydrolase"/>
    <property type="match status" value="1"/>
</dbReference>
<dbReference type="Gene3D" id="3.90.79.10">
    <property type="entry name" value="Nucleoside Triphosphate Pyrophosphohydrolase"/>
    <property type="match status" value="1"/>
</dbReference>
<dbReference type="HAMAP" id="MF_00298">
    <property type="entry name" value="Nudix_RppH"/>
    <property type="match status" value="1"/>
</dbReference>
<dbReference type="InterPro" id="IPR020476">
    <property type="entry name" value="Nudix_hydrolase"/>
</dbReference>
<dbReference type="InterPro" id="IPR015797">
    <property type="entry name" value="NUDIX_hydrolase-like_dom_sf"/>
</dbReference>
<dbReference type="InterPro" id="IPR020084">
    <property type="entry name" value="NUDIX_hydrolase_CS"/>
</dbReference>
<dbReference type="InterPro" id="IPR000086">
    <property type="entry name" value="NUDIX_hydrolase_dom"/>
</dbReference>
<dbReference type="InterPro" id="IPR022927">
    <property type="entry name" value="RppH"/>
</dbReference>
<dbReference type="NCBIfam" id="NF001937">
    <property type="entry name" value="PRK00714.1-4"/>
    <property type="match status" value="1"/>
</dbReference>
<dbReference type="NCBIfam" id="NF001938">
    <property type="entry name" value="PRK00714.1-5"/>
    <property type="match status" value="1"/>
</dbReference>
<dbReference type="PANTHER" id="PTHR43736">
    <property type="entry name" value="ADP-RIBOSE PYROPHOSPHATASE"/>
    <property type="match status" value="1"/>
</dbReference>
<dbReference type="PANTHER" id="PTHR43736:SF1">
    <property type="entry name" value="DIHYDRONEOPTERIN TRIPHOSPHATE DIPHOSPHATASE"/>
    <property type="match status" value="1"/>
</dbReference>
<dbReference type="Pfam" id="PF00293">
    <property type="entry name" value="NUDIX"/>
    <property type="match status" value="1"/>
</dbReference>
<dbReference type="PRINTS" id="PR00502">
    <property type="entry name" value="NUDIXFAMILY"/>
</dbReference>
<dbReference type="SUPFAM" id="SSF55811">
    <property type="entry name" value="Nudix"/>
    <property type="match status" value="1"/>
</dbReference>
<dbReference type="PROSITE" id="PS51462">
    <property type="entry name" value="NUDIX"/>
    <property type="match status" value="1"/>
</dbReference>
<dbReference type="PROSITE" id="PS00893">
    <property type="entry name" value="NUDIX_BOX"/>
    <property type="match status" value="1"/>
</dbReference>
<comment type="function">
    <text evidence="1">Accelerates the degradation of transcripts by removing pyrophosphate from the 5'-end of triphosphorylated RNA, leading to a more labile monophosphorylated state that can stimulate subsequent ribonuclease cleavage.</text>
</comment>
<comment type="cofactor">
    <cofactor evidence="1">
        <name>a divalent metal cation</name>
        <dbReference type="ChEBI" id="CHEBI:60240"/>
    </cofactor>
</comment>
<comment type="similarity">
    <text evidence="1">Belongs to the Nudix hydrolase family. RppH subfamily.</text>
</comment>
<evidence type="ECO:0000255" key="1">
    <source>
        <dbReference type="HAMAP-Rule" id="MF_00298"/>
    </source>
</evidence>
<name>RPPH_HALHL</name>
<reference key="1">
    <citation type="submission" date="2006-12" db="EMBL/GenBank/DDBJ databases">
        <title>Complete sequence of Halorhodospira halophila SL1.</title>
        <authorList>
            <consortium name="US DOE Joint Genome Institute"/>
            <person name="Copeland A."/>
            <person name="Lucas S."/>
            <person name="Lapidus A."/>
            <person name="Barry K."/>
            <person name="Detter J.C."/>
            <person name="Glavina del Rio T."/>
            <person name="Hammon N."/>
            <person name="Israni S."/>
            <person name="Dalin E."/>
            <person name="Tice H."/>
            <person name="Pitluck S."/>
            <person name="Saunders E."/>
            <person name="Brettin T."/>
            <person name="Bruce D."/>
            <person name="Han C."/>
            <person name="Tapia R."/>
            <person name="Schmutz J."/>
            <person name="Larimer F."/>
            <person name="Land M."/>
            <person name="Hauser L."/>
            <person name="Kyrpides N."/>
            <person name="Mikhailova N."/>
            <person name="Hoff W."/>
            <person name="Richardson P."/>
        </authorList>
    </citation>
    <scope>NUCLEOTIDE SEQUENCE [LARGE SCALE GENOMIC DNA]</scope>
    <source>
        <strain>DSM 244 / SL1</strain>
    </source>
</reference>
<protein>
    <recommendedName>
        <fullName evidence="1">RNA pyrophosphohydrolase</fullName>
        <ecNumber evidence="1">3.6.1.-</ecNumber>
    </recommendedName>
    <alternativeName>
        <fullName evidence="1">(Di)nucleoside polyphosphate hydrolase</fullName>
    </alternativeName>
</protein>
<sequence>MVDSDGFRPNVGIIVANDDGRVLWARRAGEDAWQFPQGGVEANETPLEALYRELREEVGLGPADVAVLGATRRWLRYRLPRRMIRRRGSRCIGQKQIWFLLRLLADEQRVRVDRVARPEFDRWRWVDYWYPVEEVIFFKRQVYRQALQELSGYLQADDWAGTGTEGGPAAVIPPAARRRLR</sequence>
<keyword id="KW-0378">Hydrolase</keyword>
<keyword id="KW-1185">Reference proteome</keyword>
<accession>A1WVE9</accession>
<proteinExistence type="inferred from homology"/>